<feature type="chain" id="PRO_0000208023" description="TBC1 domain family member 1">
    <location>
        <begin position="1"/>
        <end position="1255"/>
    </location>
</feature>
<feature type="domain" description="PID" evidence="2">
    <location>
        <begin position="238"/>
        <end position="398"/>
    </location>
</feature>
<feature type="domain" description="Rab-GAP TBC" evidence="3">
    <location>
        <begin position="887"/>
        <end position="1081"/>
    </location>
</feature>
<feature type="region of interest" description="Disordered" evidence="4">
    <location>
        <begin position="208"/>
        <end position="228"/>
    </location>
</feature>
<feature type="region of interest" description="Disordered" evidence="4">
    <location>
        <begin position="509"/>
        <end position="544"/>
    </location>
</feature>
<feature type="region of interest" description="Disordered" evidence="4">
    <location>
        <begin position="559"/>
        <end position="581"/>
    </location>
</feature>
<feature type="region of interest" description="Disordered" evidence="4">
    <location>
        <begin position="595"/>
        <end position="614"/>
    </location>
</feature>
<feature type="region of interest" description="Disordered" evidence="4">
    <location>
        <begin position="621"/>
        <end position="681"/>
    </location>
</feature>
<feature type="region of interest" description="Disordered" evidence="4">
    <location>
        <begin position="764"/>
        <end position="786"/>
    </location>
</feature>
<feature type="region of interest" description="Disordered" evidence="4">
    <location>
        <begin position="1233"/>
        <end position="1255"/>
    </location>
</feature>
<feature type="compositionally biased region" description="Low complexity" evidence="4">
    <location>
        <begin position="519"/>
        <end position="539"/>
    </location>
</feature>
<feature type="compositionally biased region" description="Polar residues" evidence="4">
    <location>
        <begin position="670"/>
        <end position="679"/>
    </location>
</feature>
<feature type="modified residue" description="Phosphoserine" evidence="5">
    <location>
        <position position="146"/>
    </location>
</feature>
<feature type="modified residue" description="Phosphoserine; by PKB/AKT1" evidence="5">
    <location>
        <position position="229"/>
    </location>
</feature>
<feature type="modified residue" description="Phosphoserine; by AMPK" evidence="5">
    <location>
        <position position="231"/>
    </location>
</feature>
<feature type="modified residue" description="Phosphoserine; by PKB/AKT1" evidence="5">
    <location>
        <position position="489"/>
    </location>
</feature>
<feature type="modified residue" description="Phosphoserine" evidence="5 9">
    <location>
        <position position="497"/>
    </location>
</feature>
<feature type="modified residue" description="Phosphothreonine; by PKB/AKT1" evidence="5">
    <location>
        <position position="499"/>
    </location>
</feature>
<feature type="modified residue" description="Phosphoserine" evidence="5 9">
    <location>
        <position position="501"/>
    </location>
</feature>
<feature type="modified residue" description="Phosphoserine" evidence="5">
    <location>
        <position position="519"/>
    </location>
</feature>
<feature type="modified residue" description="Phosphoserine" evidence="5">
    <location>
        <position position="521"/>
    </location>
</feature>
<feature type="modified residue" description="Phosphoserine" evidence="5 9">
    <location>
        <position position="559"/>
    </location>
</feature>
<feature type="modified residue" description="Phosphoserine" evidence="9">
    <location>
        <position position="560"/>
    </location>
</feature>
<feature type="modified residue" description="Phosphoserine" evidence="1">
    <location>
        <position position="564"/>
    </location>
</feature>
<feature type="modified residue" description="Phosphoserine" evidence="5">
    <location>
        <position position="565"/>
    </location>
</feature>
<feature type="modified residue" description="Phosphoserine" evidence="1">
    <location>
        <position position="579"/>
    </location>
</feature>
<feature type="modified residue" description="Phosphothreonine" evidence="5 9">
    <location>
        <position position="590"/>
    </location>
</feature>
<feature type="modified residue" description="Phosphoserine" evidence="5">
    <location>
        <position position="608"/>
    </location>
</feature>
<feature type="modified residue" description="Phosphoserine; by PKB/AKT1" evidence="5 9">
    <location>
        <position position="621"/>
    </location>
</feature>
<feature type="modified residue" description="Phosphoserine" evidence="5 9">
    <location>
        <position position="660"/>
    </location>
</feature>
<feature type="modified residue" description="Phosphoserine" evidence="5">
    <location>
        <position position="661"/>
    </location>
</feature>
<feature type="modified residue" description="Phosphoserine; by PKB/AKT1" evidence="5">
    <location>
        <position position="697"/>
    </location>
</feature>
<feature type="modified residue" description="Phosphoserine" evidence="5">
    <location>
        <position position="698"/>
    </location>
</feature>
<feature type="modified residue" description="Phosphoserine" evidence="5">
    <location>
        <position position="699"/>
    </location>
</feature>
<feature type="modified residue" description="Phosphoserine; by AMPK" evidence="5 9">
    <location>
        <position position="700"/>
    </location>
</feature>
<feature type="modified residue" description="Phosphoserine" evidence="9">
    <location>
        <position position="782"/>
    </location>
</feature>
<feature type="modified residue" description="Phosphoserine" evidence="5">
    <location>
        <position position="1028"/>
    </location>
</feature>
<feature type="modified residue" description="Phosphotyrosine" evidence="5">
    <location>
        <position position="1039"/>
    </location>
</feature>
<feature type="modified residue" description="Phosphothreonine" evidence="5">
    <location>
        <position position="1218"/>
    </location>
</feature>
<feature type="splice variant" id="VSP_008473" description="In isoform 2." evidence="7">
    <original>NVDHLPGGESQGCPGQPSAPPPPRLNPSASSPNFFKYLKHNSSGEQSGNAVPKSVSYRNALRKKLHSSSSVPNFLKFLAPVDENNTCDFKNTNR</original>
    <variation>K</variation>
    <location>
        <begin position="631"/>
        <end position="724"/>
    </location>
</feature>
<feature type="sequence conflict" description="In Ref. 2; BAC65727." evidence="8" ref="2">
    <original>E</original>
    <variation>K</variation>
    <location>
        <position position="174"/>
    </location>
</feature>
<feature type="sequence conflict" description="In Ref. 1; AAA85223." evidence="8" ref="1">
    <original>Q</original>
    <variation>P</variation>
    <location>
        <position position="289"/>
    </location>
</feature>
<feature type="sequence conflict" description="In Ref. 1; AAA85223." evidence="8" ref="1">
    <original>E</original>
    <variation>A</variation>
    <location>
        <position position="462"/>
    </location>
</feature>
<feature type="sequence conflict" description="In Ref. 4; AAH04675." evidence="8" ref="4">
    <original>E</original>
    <variation>D</variation>
    <location>
        <position position="848"/>
    </location>
</feature>
<feature type="sequence conflict" description="In Ref. 1; AAA85223." evidence="8" ref="1">
    <original>I</original>
    <variation>T</variation>
    <location>
        <position position="1047"/>
    </location>
</feature>
<feature type="sequence conflict" description="In Ref. 1; AAA85223." evidence="8" ref="1">
    <original>SL</original>
    <variation>PT</variation>
    <location>
        <begin position="1050"/>
        <end position="1051"/>
    </location>
</feature>
<feature type="sequence conflict" description="In Ref. 4; AAH04675." evidence="8" ref="4">
    <original>A</original>
    <variation>P</variation>
    <location>
        <position position="1143"/>
    </location>
</feature>
<feature type="sequence conflict" description="In Ref. 1; AAA85223." evidence="8" ref="1">
    <original>L</original>
    <variation>V</variation>
    <location>
        <position position="1151"/>
    </location>
</feature>
<feature type="sequence conflict" description="In Ref. 1; AAA85223." evidence="8" ref="1">
    <original>S</original>
    <variation>T</variation>
    <location>
        <position position="1176"/>
    </location>
</feature>
<feature type="sequence conflict" description="In Ref. 1; AAA85223." evidence="8" ref="1">
    <original>A</original>
    <variation>R</variation>
    <location>
        <position position="1215"/>
    </location>
</feature>
<keyword id="KW-0025">Alternative splicing</keyword>
<keyword id="KW-0343">GTPase activation</keyword>
<keyword id="KW-0539">Nucleus</keyword>
<keyword id="KW-0597">Phosphoprotein</keyword>
<keyword id="KW-1185">Reference proteome</keyword>
<gene>
    <name type="primary">Tbc1d1</name>
    <name type="synonym">Kiaa1108</name>
    <name type="synonym">Tbc1</name>
</gene>
<comment type="function">
    <text evidence="5">May act as a GTPase-activating protein for Rab family protein(s). May play a role in the cell cycle and differentiation of various tissues. Involved in the trafficking and translocation of GLUT4-containing vesicles and insulin-stimulated glucose uptake into cells.</text>
</comment>
<comment type="subunit">
    <text evidence="1">Interacts with APPL2 (via BAR domain); interaction is dependent of TBC1D1 phosphorylation at Ser-229; interaction diminishes the phosphorylation of TBC1D1 at Thr-590, resulting in inhibition of SLC2A4/GLUT4 translocation and glucose uptake.</text>
</comment>
<comment type="interaction">
    <interactant intactId="EBI-21012140">
        <id>Q60949</id>
    </interactant>
    <interactant intactId="EBI-647007">
        <id>Q8K3G9</id>
        <label>Appl2</label>
    </interactant>
    <organismsDiffer>false</organismsDiffer>
    <experiments>2</experiments>
</comment>
<comment type="subcellular location">
    <subcellularLocation>
        <location evidence="6">Nucleus</location>
    </subcellularLocation>
</comment>
<comment type="alternative products">
    <event type="alternative splicing"/>
    <isoform>
        <id>Q60949-1</id>
        <name>1</name>
        <sequence type="displayed"/>
    </isoform>
    <isoform>
        <id>Q60949-2</id>
        <name>2</name>
        <sequence type="described" ref="VSP_008473"/>
    </isoform>
</comment>
<comment type="tissue specificity">
    <text evidence="6">Expressed in highest levels in hematopoietic cells, testis and kidney.</text>
</comment>
<comment type="PTM">
    <text evidence="5">Insulin-stimulated phosphorylation by AKT family kinases stimulates SLC2A4/GLUT4 translocation.</text>
</comment>
<comment type="sequence caution" evidence="8">
    <conflict type="frameshift">
        <sequence resource="EMBL-CDS" id="AAA85223"/>
    </conflict>
</comment>
<comment type="sequence caution" evidence="8">
    <conflict type="erroneous initiation">
        <sequence resource="EMBL-CDS" id="BAC65727"/>
    </conflict>
    <text>Extended N-terminus.</text>
</comment>
<sequence length="1255" mass="142026">MEAITFTARKHPFPNEVSVDFGLQLVGSLPVHSLTTMPMLPWVVAEVRRLSGQCSKKEPRTKQVRLWVSPSGLRCEPDLEKSQPWDPLICSSIFECKPQRVHKLIHNSHDPSYFACLIKEDAAHRQSLCYVFKADDQTKVPEIISSIRQAGKIARQEELRCPSEFDDTFAKKFEVLFCGRVTVAHKKAPPALIDECIEKFNHVSCGRRTDWEAPTGQPSAPGPRPMRKSFSQPGLRSLAFRKEFQDASLRSSTFSSFDNDIENHLIGGHNVVQPTDMEENRTMLFTIGQSEVYLISPDTKKIALEKNFKEISFCSQGIRHVDHFGFICRECSGGGSGGFHFVCYVFQCTNEALVDEIMMTLKQAFTVAAVQQTAKAPAQLCEGCPLQGLHKLCERIEGMNSSKTKLELQKHLTTLTNQEQATIFEEVQKLRPRNEQRENELIISFLRCLYEEKQKEHSHTGEPKQTLQVAAENIGSDLPPSASRFRLDSLKNRAKRSLTESLESILSRGNKARGLQDHSASVDLDSSTSSTLSNTSKELSMGDKEAFPVSETSFKLLGSSDDLSSDSEGHIAEESALLSPQQAFRRRANTLSHFPVECPAPPEPAQSSPGVSQRKLMRYHSVSTETPHERNVDHLPGGESQGCPGQPSAPPPPRLNPSASSPNFFKYLKHNSSGEQSGNAVPKSVSYRNALRKKLHSSSSVPNFLKFLAPVDENNTCDFKNTNRDFESKANHLGDTDGTPVKTRRHSWRQQIFLRVATPQKACDSPSRYEDYSELGELPPRSPLEPVCEDGPFGPVQEEKRKTSRELRELWKKAILQQILLLRMEKENQKLQASENDLLNKRLKLDYEEITPCLKEVTTVWEKMLSTPGRSKIKFDMEKVHSAVGQGVPRHHRGEIWKFLAEQFHLKHPFPSKQQPKDVPYKELLKKLTSQQHAILIDLGRTFPTHPYFSAQLGAGQLSLYNILKAYSLLDQEVGYCQGLSFVAGILLLHMSEEEAFKMLKFLMFDMGLRKQYRPDMIILQIQMYQLSRLLHDYHRDLYNHLEEHEIGPSLYAAPWFLTVFASQFPLGFVARVFDMIFLQGSEVIFKVALSLLGSHKPLILQHENLETIVDFIKNTLPNLGLVQMEKTISQVFEMDIAKQLQAYEVEYHVLQEELIESSPLSDNQRMEKLEKTNSSLRKQNLDLLEQLQVANARIQSLEATVEKLLTSESKLKQAALTLEVERSALLQMVEELRRQSARPSTPEPDCTQLEPTGD</sequence>
<evidence type="ECO:0000250" key="1">
    <source>
        <dbReference type="UniProtKB" id="Q86TI0"/>
    </source>
</evidence>
<evidence type="ECO:0000255" key="2">
    <source>
        <dbReference type="PROSITE-ProRule" id="PRU00148"/>
    </source>
</evidence>
<evidence type="ECO:0000255" key="3">
    <source>
        <dbReference type="PROSITE-ProRule" id="PRU00163"/>
    </source>
</evidence>
<evidence type="ECO:0000256" key="4">
    <source>
        <dbReference type="SAM" id="MobiDB-lite"/>
    </source>
</evidence>
<evidence type="ECO:0000269" key="5">
    <source>
    </source>
</evidence>
<evidence type="ECO:0000269" key="6">
    <source>
    </source>
</evidence>
<evidence type="ECO:0000303" key="7">
    <source>
    </source>
</evidence>
<evidence type="ECO:0000305" key="8"/>
<evidence type="ECO:0007744" key="9">
    <source>
    </source>
</evidence>
<reference key="1">
    <citation type="journal article" date="1995" name="Oncogene">
        <title>Molecular cloning of a cDNA with a novel domain present in the tre-2 oncogene and the yeast cell cycle regulators BUB2 and cdc16.</title>
        <authorList>
            <person name="Richardson P.M."/>
            <person name="Zon L.I."/>
        </authorList>
    </citation>
    <scope>NUCLEOTIDE SEQUENCE [MRNA] (ISOFORM 2)</scope>
    <scope>SUBCELLULAR LOCATION</scope>
    <scope>TISSUE SPECIFICITY</scope>
</reference>
<reference key="2">
    <citation type="journal article" date="2003" name="DNA Res.">
        <title>Prediction of the coding sequences of mouse homologues of KIAA gene: II. The complete nucleotide sequences of 400 mouse KIAA-homologous cDNAs identified by screening of terminal sequences of cDNA clones randomly sampled from size-fractionated libraries.</title>
        <authorList>
            <person name="Okazaki N."/>
            <person name="Kikuno R."/>
            <person name="Ohara R."/>
            <person name="Inamoto S."/>
            <person name="Aizawa H."/>
            <person name="Yuasa S."/>
            <person name="Nakajima D."/>
            <person name="Nagase T."/>
            <person name="Ohara O."/>
            <person name="Koga H."/>
        </authorList>
    </citation>
    <scope>NUCLEOTIDE SEQUENCE [LARGE SCALE MRNA] (ISOFORM 1)</scope>
    <source>
        <tissue>Brain</tissue>
    </source>
</reference>
<reference key="3">
    <citation type="journal article" date="2009" name="PLoS Biol.">
        <title>Lineage-specific biology revealed by a finished genome assembly of the mouse.</title>
        <authorList>
            <person name="Church D.M."/>
            <person name="Goodstadt L."/>
            <person name="Hillier L.W."/>
            <person name="Zody M.C."/>
            <person name="Goldstein S."/>
            <person name="She X."/>
            <person name="Bult C.J."/>
            <person name="Agarwala R."/>
            <person name="Cherry J.L."/>
            <person name="DiCuccio M."/>
            <person name="Hlavina W."/>
            <person name="Kapustin Y."/>
            <person name="Meric P."/>
            <person name="Maglott D."/>
            <person name="Birtle Z."/>
            <person name="Marques A.C."/>
            <person name="Graves T."/>
            <person name="Zhou S."/>
            <person name="Teague B."/>
            <person name="Potamousis K."/>
            <person name="Churas C."/>
            <person name="Place M."/>
            <person name="Herschleb J."/>
            <person name="Runnheim R."/>
            <person name="Forrest D."/>
            <person name="Amos-Landgraf J."/>
            <person name="Schwartz D.C."/>
            <person name="Cheng Z."/>
            <person name="Lindblad-Toh K."/>
            <person name="Eichler E.E."/>
            <person name="Ponting C.P."/>
        </authorList>
    </citation>
    <scope>NUCLEOTIDE SEQUENCE [LARGE SCALE GENOMIC DNA]</scope>
    <source>
        <strain>C57BL/6J</strain>
    </source>
</reference>
<reference key="4">
    <citation type="journal article" date="2004" name="Genome Res.">
        <title>The status, quality, and expansion of the NIH full-length cDNA project: the Mammalian Gene Collection (MGC).</title>
        <authorList>
            <consortium name="The MGC Project Team"/>
        </authorList>
    </citation>
    <scope>NUCLEOTIDE SEQUENCE [LARGE SCALE MRNA] OF 762-1255</scope>
</reference>
<reference key="5">
    <citation type="journal article" date="2009" name="J. Biol. Chem.">
        <title>Insulin-stimulated phosphorylation of the Rab GTPase-activating protein TBC1D1 regulates GLUT4 translocation.</title>
        <authorList>
            <person name="Peck G.R."/>
            <person name="Chavez J.A."/>
            <person name="Roach W.G."/>
            <person name="Budnik B.A."/>
            <person name="Lane W.S."/>
            <person name="Karlsson H.K."/>
            <person name="Zierath J.R."/>
            <person name="Lienhard G.E."/>
        </authorList>
    </citation>
    <scope>FUNCTION</scope>
    <scope>PHOSPHORYLATION AT SER-146; SER-229; SER-231; SER-489; SER-497; THR-499; SER-501; SER-519; SER-521; SER-559; SER-565; THR-590; SER-608; SER-621; SER-660; SER-661; SER-697; SER-698; SER-699; SER-700; SER-1028; TYR-1039 AND THR-1218</scope>
</reference>
<reference key="6">
    <citation type="journal article" date="2010" name="Cell">
        <title>A tissue-specific atlas of mouse protein phosphorylation and expression.</title>
        <authorList>
            <person name="Huttlin E.L."/>
            <person name="Jedrychowski M.P."/>
            <person name="Elias J.E."/>
            <person name="Goswami T."/>
            <person name="Rad R."/>
            <person name="Beausoleil S.A."/>
            <person name="Villen J."/>
            <person name="Haas W."/>
            <person name="Sowa M.E."/>
            <person name="Gygi S.P."/>
        </authorList>
    </citation>
    <scope>PHOSPHORYLATION [LARGE SCALE ANALYSIS] AT SER-497; SER-501; SER-559; SER-560; THR-590; SER-621; SER-660; SER-700 AND SER-782</scope>
    <scope>IDENTIFICATION BY MASS SPECTROMETRY [LARGE SCALE ANALYSIS]</scope>
    <source>
        <tissue>Brain</tissue>
        <tissue>Brown adipose tissue</tissue>
        <tissue>Heart</tissue>
        <tissue>Kidney</tissue>
        <tissue>Liver</tissue>
        <tissue>Lung</tissue>
        <tissue>Pancreas</tissue>
        <tissue>Spleen</tissue>
        <tissue>Testis</tissue>
    </source>
</reference>
<proteinExistence type="evidence at protein level"/>
<dbReference type="EMBL" id="U33005">
    <property type="protein sequence ID" value="AAA85223.1"/>
    <property type="status" value="ALT_FRAME"/>
    <property type="molecule type" value="mRNA"/>
</dbReference>
<dbReference type="EMBL" id="AK122445">
    <property type="protein sequence ID" value="BAC65727.1"/>
    <property type="status" value="ALT_INIT"/>
    <property type="molecule type" value="mRNA"/>
</dbReference>
<dbReference type="EMBL" id="AC131679">
    <property type="status" value="NOT_ANNOTATED_CDS"/>
    <property type="molecule type" value="Genomic_DNA"/>
</dbReference>
<dbReference type="EMBL" id="AC132271">
    <property type="status" value="NOT_ANNOTATED_CDS"/>
    <property type="molecule type" value="Genomic_DNA"/>
</dbReference>
<dbReference type="EMBL" id="BC004675">
    <property type="protein sequence ID" value="AAH04675.1"/>
    <property type="molecule type" value="mRNA"/>
</dbReference>
<dbReference type="CCDS" id="CCDS39094.1">
    <molecule id="Q60949-2"/>
</dbReference>
<dbReference type="CCDS" id="CCDS80287.1">
    <molecule id="Q60949-1"/>
</dbReference>
<dbReference type="PIR" id="T29104">
    <property type="entry name" value="T29104"/>
</dbReference>
<dbReference type="RefSeq" id="NP_001297540.1">
    <molecule id="Q60949-1"/>
    <property type="nucleotide sequence ID" value="NM_001310611.1"/>
</dbReference>
<dbReference type="RefSeq" id="NP_062610.2">
    <molecule id="Q60949-2"/>
    <property type="nucleotide sequence ID" value="NM_019636.3"/>
</dbReference>
<dbReference type="RefSeq" id="XP_006504100.1">
    <molecule id="Q60949-2"/>
    <property type="nucleotide sequence ID" value="XM_006504037.5"/>
</dbReference>
<dbReference type="RefSeq" id="XP_011239059.1">
    <molecule id="Q60949-1"/>
    <property type="nucleotide sequence ID" value="XM_011240757.4"/>
</dbReference>
<dbReference type="RefSeq" id="XP_011239060.1">
    <molecule id="Q60949-1"/>
    <property type="nucleotide sequence ID" value="XM_011240758.3"/>
</dbReference>
<dbReference type="SMR" id="Q60949"/>
<dbReference type="BioGRID" id="208365">
    <property type="interactions" value="4"/>
</dbReference>
<dbReference type="FunCoup" id="Q60949">
    <property type="interactions" value="1191"/>
</dbReference>
<dbReference type="IntAct" id="Q60949">
    <property type="interactions" value="1"/>
</dbReference>
<dbReference type="STRING" id="10090.ENSMUSP00000044577"/>
<dbReference type="iPTMnet" id="Q60949"/>
<dbReference type="PhosphoSitePlus" id="Q60949"/>
<dbReference type="SwissPalm" id="Q60949"/>
<dbReference type="jPOST" id="Q60949"/>
<dbReference type="PaxDb" id="10090-ENSMUSP00000044577"/>
<dbReference type="ProteomicsDB" id="254657">
    <molecule id="Q60949-1"/>
</dbReference>
<dbReference type="ProteomicsDB" id="254658">
    <molecule id="Q60949-2"/>
</dbReference>
<dbReference type="Pumba" id="Q60949"/>
<dbReference type="Antibodypedia" id="10398">
    <property type="antibodies" value="220 antibodies from 34 providers"/>
</dbReference>
<dbReference type="DNASU" id="57915"/>
<dbReference type="Ensembl" id="ENSMUST00000043893.13">
    <molecule id="Q60949-1"/>
    <property type="protein sequence ID" value="ENSMUSP00000044577.7"/>
    <property type="gene ID" value="ENSMUSG00000029174.19"/>
</dbReference>
<dbReference type="Ensembl" id="ENSMUST00000101195.9">
    <molecule id="Q60949-2"/>
    <property type="protein sequence ID" value="ENSMUSP00000098756.3"/>
    <property type="gene ID" value="ENSMUSG00000029174.19"/>
</dbReference>
<dbReference type="Ensembl" id="ENSMUST00000121370.8">
    <molecule id="Q60949-2"/>
    <property type="protein sequence ID" value="ENSMUSP00000112493.2"/>
    <property type="gene ID" value="ENSMUSG00000029174.19"/>
</dbReference>
<dbReference type="GeneID" id="57915"/>
<dbReference type="KEGG" id="mmu:57915"/>
<dbReference type="UCSC" id="uc008xmm.2">
    <molecule id="Q60949-1"/>
    <property type="organism name" value="mouse"/>
</dbReference>
<dbReference type="AGR" id="MGI:1889508"/>
<dbReference type="CTD" id="23216"/>
<dbReference type="MGI" id="MGI:1889508">
    <property type="gene designation" value="Tbc1d1"/>
</dbReference>
<dbReference type="VEuPathDB" id="HostDB:ENSMUSG00000029174"/>
<dbReference type="eggNOG" id="KOG4436">
    <property type="taxonomic scope" value="Eukaryota"/>
</dbReference>
<dbReference type="GeneTree" id="ENSGT00940000157949"/>
<dbReference type="HOGENOM" id="CLU_005350_13_0_1"/>
<dbReference type="InParanoid" id="Q60949"/>
<dbReference type="OMA" id="ETPHEQK"/>
<dbReference type="OrthoDB" id="295078at2759"/>
<dbReference type="PhylomeDB" id="Q60949"/>
<dbReference type="TreeFam" id="TF317184"/>
<dbReference type="BioGRID-ORCS" id="57915">
    <property type="hits" value="2 hits in 78 CRISPR screens"/>
</dbReference>
<dbReference type="ChiTaRS" id="Tbc1d1">
    <property type="organism name" value="mouse"/>
</dbReference>
<dbReference type="PRO" id="PR:Q60949"/>
<dbReference type="Proteomes" id="UP000000589">
    <property type="component" value="Chromosome 5"/>
</dbReference>
<dbReference type="RNAct" id="Q60949">
    <property type="molecule type" value="protein"/>
</dbReference>
<dbReference type="Bgee" id="ENSMUSG00000029174">
    <property type="expression patterns" value="Expressed in hindlimb stylopod muscle and 249 other cell types or tissues"/>
</dbReference>
<dbReference type="ExpressionAtlas" id="Q60949">
    <property type="expression patterns" value="baseline and differential"/>
</dbReference>
<dbReference type="GO" id="GO:0005829">
    <property type="term" value="C:cytosol"/>
    <property type="evidence" value="ECO:0000304"/>
    <property type="project" value="Reactome"/>
</dbReference>
<dbReference type="GO" id="GO:0005634">
    <property type="term" value="C:nucleus"/>
    <property type="evidence" value="ECO:0007669"/>
    <property type="project" value="UniProtKB-SubCell"/>
</dbReference>
<dbReference type="GO" id="GO:0005096">
    <property type="term" value="F:GTPase activator activity"/>
    <property type="evidence" value="ECO:0007669"/>
    <property type="project" value="UniProtKB-KW"/>
</dbReference>
<dbReference type="GO" id="GO:0061179">
    <property type="term" value="P:negative regulation of insulin secretion involved in cellular response to glucose stimulus"/>
    <property type="evidence" value="ECO:0007669"/>
    <property type="project" value="Ensembl"/>
</dbReference>
<dbReference type="CDD" id="cd00934">
    <property type="entry name" value="PTB"/>
    <property type="match status" value="1"/>
</dbReference>
<dbReference type="CDD" id="cd01269">
    <property type="entry name" value="PTB_TBC1D1_like"/>
    <property type="match status" value="1"/>
</dbReference>
<dbReference type="FunFam" id="1.10.472.80:FF:000003">
    <property type="entry name" value="Putative TBC1 domain family member 1"/>
    <property type="match status" value="1"/>
</dbReference>
<dbReference type="FunFam" id="1.10.8.270:FF:000001">
    <property type="entry name" value="TBC1 domain family member 1"/>
    <property type="match status" value="1"/>
</dbReference>
<dbReference type="FunFam" id="2.30.29.30:FF:000165">
    <property type="entry name" value="TBC1 domain family member 1 isoform X1"/>
    <property type="match status" value="1"/>
</dbReference>
<dbReference type="FunFam" id="1.10.10.2750:FF:000001">
    <property type="entry name" value="TBC1 domain family member 1 isoform X2"/>
    <property type="match status" value="1"/>
</dbReference>
<dbReference type="FunFam" id="2.30.29.30:FF:000076">
    <property type="entry name" value="TBC1 domain family member 4 isoform X1"/>
    <property type="match status" value="1"/>
</dbReference>
<dbReference type="Gene3D" id="1.10.10.2750">
    <property type="match status" value="1"/>
</dbReference>
<dbReference type="Gene3D" id="2.30.29.30">
    <property type="entry name" value="Pleckstrin-homology domain (PH domain)/Phosphotyrosine-binding domain (PTB)"/>
    <property type="match status" value="2"/>
</dbReference>
<dbReference type="Gene3D" id="1.10.8.270">
    <property type="entry name" value="putative rabgap domain of human tbc1 domain family member 14 like domains"/>
    <property type="match status" value="1"/>
</dbReference>
<dbReference type="Gene3D" id="1.10.472.80">
    <property type="entry name" value="Ypt/Rab-GAP domain of gyp1p, domain 3"/>
    <property type="match status" value="1"/>
</dbReference>
<dbReference type="InterPro" id="IPR021785">
    <property type="entry name" value="DUF3350"/>
</dbReference>
<dbReference type="InterPro" id="IPR011993">
    <property type="entry name" value="PH-like_dom_sf"/>
</dbReference>
<dbReference type="InterPro" id="IPR006020">
    <property type="entry name" value="PTB/PI_dom"/>
</dbReference>
<dbReference type="InterPro" id="IPR000195">
    <property type="entry name" value="Rab-GAP-TBC_dom"/>
</dbReference>
<dbReference type="InterPro" id="IPR035969">
    <property type="entry name" value="Rab-GAP_TBC_sf"/>
</dbReference>
<dbReference type="InterPro" id="IPR050302">
    <property type="entry name" value="Rab_GAP_TBC_domain"/>
</dbReference>
<dbReference type="PANTHER" id="PTHR47219">
    <property type="entry name" value="RAB GTPASE-ACTIVATING PROTEIN 1-LIKE"/>
    <property type="match status" value="1"/>
</dbReference>
<dbReference type="PANTHER" id="PTHR47219:SF18">
    <property type="entry name" value="TBC1 DOMAIN FAMILY MEMBER 1 ISOFORM X1"/>
    <property type="match status" value="1"/>
</dbReference>
<dbReference type="Pfam" id="PF11830">
    <property type="entry name" value="DUF3350"/>
    <property type="match status" value="1"/>
</dbReference>
<dbReference type="Pfam" id="PF00640">
    <property type="entry name" value="PID"/>
    <property type="match status" value="1"/>
</dbReference>
<dbReference type="Pfam" id="PF00566">
    <property type="entry name" value="RabGAP-TBC"/>
    <property type="match status" value="1"/>
</dbReference>
<dbReference type="SMART" id="SM00462">
    <property type="entry name" value="PTB"/>
    <property type="match status" value="2"/>
</dbReference>
<dbReference type="SMART" id="SM00164">
    <property type="entry name" value="TBC"/>
    <property type="match status" value="1"/>
</dbReference>
<dbReference type="SUPFAM" id="SSF50729">
    <property type="entry name" value="PH domain-like"/>
    <property type="match status" value="2"/>
</dbReference>
<dbReference type="SUPFAM" id="SSF47923">
    <property type="entry name" value="Ypt/Rab-GAP domain of gyp1p"/>
    <property type="match status" value="2"/>
</dbReference>
<dbReference type="PROSITE" id="PS01179">
    <property type="entry name" value="PID"/>
    <property type="match status" value="1"/>
</dbReference>
<dbReference type="PROSITE" id="PS50086">
    <property type="entry name" value="TBC_RABGAP"/>
    <property type="match status" value="1"/>
</dbReference>
<organism>
    <name type="scientific">Mus musculus</name>
    <name type="common">Mouse</name>
    <dbReference type="NCBI Taxonomy" id="10090"/>
    <lineage>
        <taxon>Eukaryota</taxon>
        <taxon>Metazoa</taxon>
        <taxon>Chordata</taxon>
        <taxon>Craniata</taxon>
        <taxon>Vertebrata</taxon>
        <taxon>Euteleostomi</taxon>
        <taxon>Mammalia</taxon>
        <taxon>Eutheria</taxon>
        <taxon>Euarchontoglires</taxon>
        <taxon>Glires</taxon>
        <taxon>Rodentia</taxon>
        <taxon>Myomorpha</taxon>
        <taxon>Muroidea</taxon>
        <taxon>Muridae</taxon>
        <taxon>Murinae</taxon>
        <taxon>Mus</taxon>
        <taxon>Mus</taxon>
    </lineage>
</organism>
<accession>Q60949</accession>
<accession>E9QLW9</accession>
<accession>Q80TJ9</accession>
<accession>Q923F8</accession>
<name>TBCD1_MOUSE</name>
<protein>
    <recommendedName>
        <fullName>TBC1 domain family member 1</fullName>
    </recommendedName>
</protein>